<accession>Q493H8</accession>
<dbReference type="EC" id="3.1.2.6" evidence="1"/>
<dbReference type="EMBL" id="CP000016">
    <property type="protein sequence ID" value="AAZ40862.1"/>
    <property type="molecule type" value="Genomic_DNA"/>
</dbReference>
<dbReference type="RefSeq" id="WP_011282769.1">
    <property type="nucleotide sequence ID" value="NC_007292.1"/>
</dbReference>
<dbReference type="SMR" id="Q493H8"/>
<dbReference type="STRING" id="291272.BPEN_230"/>
<dbReference type="KEGG" id="bpn:BPEN_230"/>
<dbReference type="eggNOG" id="COG0491">
    <property type="taxonomic scope" value="Bacteria"/>
</dbReference>
<dbReference type="HOGENOM" id="CLU_030571_4_1_6"/>
<dbReference type="OrthoDB" id="9802248at2"/>
<dbReference type="UniPathway" id="UPA00619">
    <property type="reaction ID" value="UER00676"/>
</dbReference>
<dbReference type="Proteomes" id="UP000007794">
    <property type="component" value="Chromosome"/>
</dbReference>
<dbReference type="GO" id="GO:0004416">
    <property type="term" value="F:hydroxyacylglutathione hydrolase activity"/>
    <property type="evidence" value="ECO:0007669"/>
    <property type="project" value="UniProtKB-UniRule"/>
</dbReference>
<dbReference type="GO" id="GO:0046872">
    <property type="term" value="F:metal ion binding"/>
    <property type="evidence" value="ECO:0007669"/>
    <property type="project" value="UniProtKB-KW"/>
</dbReference>
<dbReference type="GO" id="GO:0019243">
    <property type="term" value="P:methylglyoxal catabolic process to D-lactate via S-lactoyl-glutathione"/>
    <property type="evidence" value="ECO:0007669"/>
    <property type="project" value="InterPro"/>
</dbReference>
<dbReference type="CDD" id="cd07723">
    <property type="entry name" value="hydroxyacylglutathione_hydrolase_MBL-fold"/>
    <property type="match status" value="1"/>
</dbReference>
<dbReference type="Gene3D" id="3.60.15.10">
    <property type="entry name" value="Ribonuclease Z/Hydroxyacylglutathione hydrolase-like"/>
    <property type="match status" value="1"/>
</dbReference>
<dbReference type="HAMAP" id="MF_01374">
    <property type="entry name" value="Glyoxalase_2"/>
    <property type="match status" value="1"/>
</dbReference>
<dbReference type="InterPro" id="IPR035680">
    <property type="entry name" value="Clx_II_MBL"/>
</dbReference>
<dbReference type="InterPro" id="IPR050110">
    <property type="entry name" value="Glyoxalase_II_hydrolase"/>
</dbReference>
<dbReference type="InterPro" id="IPR032282">
    <property type="entry name" value="HAGH_C"/>
</dbReference>
<dbReference type="InterPro" id="IPR017782">
    <property type="entry name" value="Hydroxyacylglutathione_Hdrlase"/>
</dbReference>
<dbReference type="InterPro" id="IPR001279">
    <property type="entry name" value="Metallo-B-lactamas"/>
</dbReference>
<dbReference type="InterPro" id="IPR036866">
    <property type="entry name" value="RibonucZ/Hydroxyglut_hydro"/>
</dbReference>
<dbReference type="NCBIfam" id="TIGR03413">
    <property type="entry name" value="GSH_gloB"/>
    <property type="match status" value="1"/>
</dbReference>
<dbReference type="PANTHER" id="PTHR43705">
    <property type="entry name" value="HYDROXYACYLGLUTATHIONE HYDROLASE"/>
    <property type="match status" value="1"/>
</dbReference>
<dbReference type="PANTHER" id="PTHR43705:SF1">
    <property type="entry name" value="HYDROXYACYLGLUTATHIONE HYDROLASE GLOB"/>
    <property type="match status" value="1"/>
</dbReference>
<dbReference type="Pfam" id="PF16123">
    <property type="entry name" value="HAGH_C"/>
    <property type="match status" value="1"/>
</dbReference>
<dbReference type="Pfam" id="PF00753">
    <property type="entry name" value="Lactamase_B"/>
    <property type="match status" value="1"/>
</dbReference>
<dbReference type="PIRSF" id="PIRSF005457">
    <property type="entry name" value="Glx"/>
    <property type="match status" value="1"/>
</dbReference>
<dbReference type="SMART" id="SM00849">
    <property type="entry name" value="Lactamase_B"/>
    <property type="match status" value="1"/>
</dbReference>
<dbReference type="SUPFAM" id="SSF56281">
    <property type="entry name" value="Metallo-hydrolase/oxidoreductase"/>
    <property type="match status" value="1"/>
</dbReference>
<feature type="chain" id="PRO_1000068210" description="Hydroxyacylglutathione hydrolase">
    <location>
        <begin position="1"/>
        <end position="251"/>
    </location>
</feature>
<feature type="binding site" evidence="1">
    <location>
        <position position="53"/>
    </location>
    <ligand>
        <name>Zn(2+)</name>
        <dbReference type="ChEBI" id="CHEBI:29105"/>
        <label>1</label>
    </ligand>
</feature>
<feature type="binding site" evidence="1">
    <location>
        <position position="55"/>
    </location>
    <ligand>
        <name>Zn(2+)</name>
        <dbReference type="ChEBI" id="CHEBI:29105"/>
        <label>1</label>
    </ligand>
</feature>
<feature type="binding site" evidence="1">
    <location>
        <position position="57"/>
    </location>
    <ligand>
        <name>Zn(2+)</name>
        <dbReference type="ChEBI" id="CHEBI:29105"/>
        <label>2</label>
    </ligand>
</feature>
<feature type="binding site" evidence="1">
    <location>
        <position position="58"/>
    </location>
    <ligand>
        <name>Zn(2+)</name>
        <dbReference type="ChEBI" id="CHEBI:29105"/>
        <label>2</label>
    </ligand>
</feature>
<feature type="binding site" evidence="1">
    <location>
        <position position="110"/>
    </location>
    <ligand>
        <name>Zn(2+)</name>
        <dbReference type="ChEBI" id="CHEBI:29105"/>
        <label>1</label>
    </ligand>
</feature>
<feature type="binding site" evidence="1">
    <location>
        <position position="127"/>
    </location>
    <ligand>
        <name>Zn(2+)</name>
        <dbReference type="ChEBI" id="CHEBI:29105"/>
        <label>1</label>
    </ligand>
</feature>
<feature type="binding site" evidence="1">
    <location>
        <position position="127"/>
    </location>
    <ligand>
        <name>Zn(2+)</name>
        <dbReference type="ChEBI" id="CHEBI:29105"/>
        <label>2</label>
    </ligand>
</feature>
<feature type="binding site" evidence="1">
    <location>
        <position position="165"/>
    </location>
    <ligand>
        <name>Zn(2+)</name>
        <dbReference type="ChEBI" id="CHEBI:29105"/>
        <label>2</label>
    </ligand>
</feature>
<comment type="function">
    <text evidence="1">Thiolesterase that catalyzes the hydrolysis of S-D-lactoyl-glutathione to form glutathione and D-lactic acid.</text>
</comment>
<comment type="catalytic activity">
    <reaction evidence="1">
        <text>an S-(2-hydroxyacyl)glutathione + H2O = a 2-hydroxy carboxylate + glutathione + H(+)</text>
        <dbReference type="Rhea" id="RHEA:21864"/>
        <dbReference type="ChEBI" id="CHEBI:15377"/>
        <dbReference type="ChEBI" id="CHEBI:15378"/>
        <dbReference type="ChEBI" id="CHEBI:57925"/>
        <dbReference type="ChEBI" id="CHEBI:58896"/>
        <dbReference type="ChEBI" id="CHEBI:71261"/>
        <dbReference type="EC" id="3.1.2.6"/>
    </reaction>
</comment>
<comment type="cofactor">
    <cofactor evidence="1">
        <name>Zn(2+)</name>
        <dbReference type="ChEBI" id="CHEBI:29105"/>
    </cofactor>
    <text evidence="1">Binds 2 Zn(2+) ions per subunit.</text>
</comment>
<comment type="pathway">
    <text evidence="1">Secondary metabolite metabolism; methylglyoxal degradation; (R)-lactate from methylglyoxal: step 2/2.</text>
</comment>
<comment type="subunit">
    <text evidence="1">Monomer.</text>
</comment>
<comment type="similarity">
    <text evidence="1">Belongs to the metallo-beta-lactamase superfamily. Glyoxalase II family.</text>
</comment>
<evidence type="ECO:0000255" key="1">
    <source>
        <dbReference type="HAMAP-Rule" id="MF_01374"/>
    </source>
</evidence>
<organism>
    <name type="scientific">Blochmanniella pennsylvanica (strain BPEN)</name>
    <dbReference type="NCBI Taxonomy" id="291272"/>
    <lineage>
        <taxon>Bacteria</taxon>
        <taxon>Pseudomonadati</taxon>
        <taxon>Pseudomonadota</taxon>
        <taxon>Gammaproteobacteria</taxon>
        <taxon>Enterobacterales</taxon>
        <taxon>Enterobacteriaceae</taxon>
        <taxon>ant endosymbionts</taxon>
        <taxon>Candidatus Blochmanniella</taxon>
    </lineage>
</organism>
<reference key="1">
    <citation type="journal article" date="2005" name="Genome Res.">
        <title>Genome sequence of Blochmannia pennsylvanicus indicates parallel evolutionary trends among bacterial mutualists of insects.</title>
        <authorList>
            <person name="Degnan P.H."/>
            <person name="Lazarus A.B."/>
            <person name="Wernegreen J.J."/>
        </authorList>
    </citation>
    <scope>NUCLEOTIDE SEQUENCE [LARGE SCALE GENOMIC DNA]</scope>
    <source>
        <strain>BPEN</strain>
    </source>
</reference>
<proteinExistence type="inferred from homology"/>
<keyword id="KW-0378">Hydrolase</keyword>
<keyword id="KW-0479">Metal-binding</keyword>
<keyword id="KW-1185">Reference proteome</keyword>
<keyword id="KW-0862">Zinc</keyword>
<gene>
    <name evidence="1" type="primary">gloB</name>
    <name type="ordered locus">BPEN_230</name>
</gene>
<protein>
    <recommendedName>
        <fullName evidence="1">Hydroxyacylglutathione hydrolase</fullName>
        <ecNumber evidence="1">3.1.2.6</ecNumber>
    </recommendedName>
    <alternativeName>
        <fullName evidence="1">Glyoxalase II</fullName>
        <shortName evidence="1">Glx II</shortName>
    </alternativeName>
</protein>
<name>GLO2_BLOPB</name>
<sequence>MNIIRVPVLSTNYIWCLYNYKNECIIIDPGEATKVLDILKKFQFRLRAILLTHNHIDHVNGVAPLIQYFPKTIVYGPTETKNNGSHFLVSEGDDFVLLQKKFKVLNLPGHTPGHIGFYSAPWLFCGDTVFSAGCGKICIGFAQYMYESFLKIRYLPRNTLIFSGHEYTLSNVNFAISILPQDQSIINYRNKIIKLYKKKQPTVPTTLNLELKVNPFFRCGNSNIKKSLNLPCDLKEEWQVFSELRKKKDSF</sequence>